<evidence type="ECO:0000255" key="1">
    <source>
        <dbReference type="HAMAP-Rule" id="MF_00621"/>
    </source>
</evidence>
<protein>
    <recommendedName>
        <fullName evidence="1">Global transcriptional regulator CodY</fullName>
    </recommendedName>
</protein>
<sequence length="259" mass="28745">MTLLEKTRKINAMLQNAAGKTVNFKEMADTLTDVIEANTYIVSRKGKLLGYSEALPIENDRMKQMLTERQFPEEYTQSLFNVGETSSNLEVSSQYTAFPIENSELFTKGLTTIVPIVGGGERLGTLILSRLESNFTDDDLLLAEYGGTVVGMEILHEKAEEIEEEARSRAVVQMAISSLSYSELEAIEHIFDELNGKEGLLVASKIADRVGITRSVIVNALRKLESAGVIDSRSLGMKGTFIRVLNDKFLVELEKLKNN</sequence>
<gene>
    <name evidence="1" type="primary">codY</name>
    <name type="ordered locus">LMOf2365_1298</name>
</gene>
<accession>Q720E1</accession>
<feature type="chain" id="PRO_0000213228" description="Global transcriptional regulator CodY">
    <location>
        <begin position="1"/>
        <end position="259"/>
    </location>
</feature>
<feature type="DNA-binding region" description="H-T-H motif" evidence="1">
    <location>
        <begin position="203"/>
        <end position="222"/>
    </location>
</feature>
<feature type="region of interest" description="GAF domain" evidence="1">
    <location>
        <begin position="1"/>
        <end position="155"/>
    </location>
</feature>
<comment type="function">
    <text evidence="1">DNA-binding global transcriptional regulator which is involved in the adaptive response to starvation and acts by directly or indirectly controlling the expression of numerous genes in response to nutrient availability. During rapid exponential growth, CodY is highly active and represses genes whose products allow adaptation to nutrient depletion.</text>
</comment>
<comment type="subcellular location">
    <subcellularLocation>
        <location evidence="1">Cytoplasm</location>
    </subcellularLocation>
</comment>
<comment type="similarity">
    <text evidence="1">Belongs to the CodY family.</text>
</comment>
<organism>
    <name type="scientific">Listeria monocytogenes serotype 4b (strain F2365)</name>
    <dbReference type="NCBI Taxonomy" id="265669"/>
    <lineage>
        <taxon>Bacteria</taxon>
        <taxon>Bacillati</taxon>
        <taxon>Bacillota</taxon>
        <taxon>Bacilli</taxon>
        <taxon>Bacillales</taxon>
        <taxon>Listeriaceae</taxon>
        <taxon>Listeria</taxon>
    </lineage>
</organism>
<reference key="1">
    <citation type="journal article" date="2004" name="Nucleic Acids Res.">
        <title>Whole genome comparisons of serotype 4b and 1/2a strains of the food-borne pathogen Listeria monocytogenes reveal new insights into the core genome components of this species.</title>
        <authorList>
            <person name="Nelson K.E."/>
            <person name="Fouts D.E."/>
            <person name="Mongodin E.F."/>
            <person name="Ravel J."/>
            <person name="DeBoy R.T."/>
            <person name="Kolonay J.F."/>
            <person name="Rasko D.A."/>
            <person name="Angiuoli S.V."/>
            <person name="Gill S.R."/>
            <person name="Paulsen I.T."/>
            <person name="Peterson J.D."/>
            <person name="White O."/>
            <person name="Nelson W.C."/>
            <person name="Nierman W.C."/>
            <person name="Beanan M.J."/>
            <person name="Brinkac L.M."/>
            <person name="Daugherty S.C."/>
            <person name="Dodson R.J."/>
            <person name="Durkin A.S."/>
            <person name="Madupu R."/>
            <person name="Haft D.H."/>
            <person name="Selengut J."/>
            <person name="Van Aken S.E."/>
            <person name="Khouri H.M."/>
            <person name="Fedorova N."/>
            <person name="Forberger H.A."/>
            <person name="Tran B."/>
            <person name="Kathariou S."/>
            <person name="Wonderling L.D."/>
            <person name="Uhlich G.A."/>
            <person name="Bayles D.O."/>
            <person name="Luchansky J.B."/>
            <person name="Fraser C.M."/>
        </authorList>
    </citation>
    <scope>NUCLEOTIDE SEQUENCE [LARGE SCALE GENOMIC DNA]</scope>
    <source>
        <strain>F2365</strain>
    </source>
</reference>
<name>CODY_LISMF</name>
<dbReference type="EMBL" id="AE017262">
    <property type="protein sequence ID" value="AAT04073.1"/>
    <property type="molecule type" value="Genomic_DNA"/>
</dbReference>
<dbReference type="RefSeq" id="WP_003726695.1">
    <property type="nucleotide sequence ID" value="NC_002973.6"/>
</dbReference>
<dbReference type="SMR" id="Q720E1"/>
<dbReference type="GeneID" id="93239154"/>
<dbReference type="KEGG" id="lmf:LMOf2365_1298"/>
<dbReference type="HOGENOM" id="CLU_089581_0_0_9"/>
<dbReference type="GO" id="GO:0005737">
    <property type="term" value="C:cytoplasm"/>
    <property type="evidence" value="ECO:0007669"/>
    <property type="project" value="UniProtKB-SubCell"/>
</dbReference>
<dbReference type="GO" id="GO:0003677">
    <property type="term" value="F:DNA binding"/>
    <property type="evidence" value="ECO:0007669"/>
    <property type="project" value="UniProtKB-UniRule"/>
</dbReference>
<dbReference type="GO" id="GO:0003700">
    <property type="term" value="F:DNA-binding transcription factor activity"/>
    <property type="evidence" value="ECO:0007669"/>
    <property type="project" value="InterPro"/>
</dbReference>
<dbReference type="GO" id="GO:0005525">
    <property type="term" value="F:GTP binding"/>
    <property type="evidence" value="ECO:0007669"/>
    <property type="project" value="InterPro"/>
</dbReference>
<dbReference type="GO" id="GO:0045892">
    <property type="term" value="P:negative regulation of DNA-templated transcription"/>
    <property type="evidence" value="ECO:0007669"/>
    <property type="project" value="UniProtKB-UniRule"/>
</dbReference>
<dbReference type="FunFam" id="1.10.10.10:FF:000034">
    <property type="entry name" value="GTP-sensing transcriptional pleiotropic repressor CodY"/>
    <property type="match status" value="1"/>
</dbReference>
<dbReference type="FunFam" id="3.30.450.40:FF:000003">
    <property type="entry name" value="GTP-sensing transcriptional pleiotropic repressor CodY"/>
    <property type="match status" value="1"/>
</dbReference>
<dbReference type="Gene3D" id="3.30.450.40">
    <property type="match status" value="1"/>
</dbReference>
<dbReference type="Gene3D" id="1.10.10.10">
    <property type="entry name" value="Winged helix-like DNA-binding domain superfamily/Winged helix DNA-binding domain"/>
    <property type="match status" value="1"/>
</dbReference>
<dbReference type="HAMAP" id="MF_00621">
    <property type="entry name" value="HTH_type_CodY"/>
    <property type="match status" value="1"/>
</dbReference>
<dbReference type="InterPro" id="IPR014154">
    <property type="entry name" value="CodY"/>
</dbReference>
<dbReference type="InterPro" id="IPR029016">
    <property type="entry name" value="GAF-like_dom_sf"/>
</dbReference>
<dbReference type="InterPro" id="IPR013198">
    <property type="entry name" value="GTP_trans_reg_CodY_C"/>
</dbReference>
<dbReference type="InterPro" id="IPR010312">
    <property type="entry name" value="Transc_reg_CodY_N"/>
</dbReference>
<dbReference type="InterPro" id="IPR036388">
    <property type="entry name" value="WH-like_DNA-bd_sf"/>
</dbReference>
<dbReference type="InterPro" id="IPR036390">
    <property type="entry name" value="WH_DNA-bd_sf"/>
</dbReference>
<dbReference type="NCBIfam" id="TIGR02787">
    <property type="entry name" value="codY_Gpos"/>
    <property type="match status" value="1"/>
</dbReference>
<dbReference type="NCBIfam" id="NF003170">
    <property type="entry name" value="PRK04158.1"/>
    <property type="match status" value="1"/>
</dbReference>
<dbReference type="PANTHER" id="PTHR40062:SF1">
    <property type="entry name" value="GLOBAL TRANSCRIPTIONAL REGULATOR CODY"/>
    <property type="match status" value="1"/>
</dbReference>
<dbReference type="PANTHER" id="PTHR40062">
    <property type="entry name" value="GTP-SENSING TRANSCRIPTIONAL PLEIOTROPIC REPRESSOR CODY"/>
    <property type="match status" value="1"/>
</dbReference>
<dbReference type="Pfam" id="PF06018">
    <property type="entry name" value="CodY"/>
    <property type="match status" value="1"/>
</dbReference>
<dbReference type="Pfam" id="PF08222">
    <property type="entry name" value="HTH_CodY"/>
    <property type="match status" value="1"/>
</dbReference>
<dbReference type="PIRSF" id="PIRSF011572">
    <property type="entry name" value="GTP_sensing_CodY"/>
    <property type="match status" value="1"/>
</dbReference>
<dbReference type="SUPFAM" id="SSF46785">
    <property type="entry name" value="Winged helix' DNA-binding domain"/>
    <property type="match status" value="1"/>
</dbReference>
<keyword id="KW-0963">Cytoplasm</keyword>
<keyword id="KW-0238">DNA-binding</keyword>
<keyword id="KW-0678">Repressor</keyword>
<keyword id="KW-0804">Transcription</keyword>
<keyword id="KW-0805">Transcription regulation</keyword>
<proteinExistence type="inferred from homology"/>